<accession>A0RYW9</accession>
<proteinExistence type="inferred from homology"/>
<comment type="function">
    <text evidence="1">Catalytic subunit of DNA primase, an RNA polymerase that catalyzes the synthesis of short RNA molecules used as primers for DNA polymerase during DNA replication. The small subunit contains the primase catalytic core and has DNA synthesis activity on its own. Binding to the large subunit stabilizes and modulates the activity, increasing the rate of DNA synthesis while decreasing the length of the DNA fragments, and conferring RNA synthesis capability. The DNA polymerase activity may enable DNA primase to also catalyze primer extension after primer synthesis. May also play a role in DNA repair.</text>
</comment>
<comment type="cofactor">
    <cofactor evidence="1">
        <name>Mg(2+)</name>
        <dbReference type="ChEBI" id="CHEBI:18420"/>
    </cofactor>
    <cofactor evidence="1">
        <name>Mn(2+)</name>
        <dbReference type="ChEBI" id="CHEBI:29035"/>
    </cofactor>
</comment>
<comment type="subunit">
    <text evidence="1">Heterodimer of a small subunit (PriS) and a large subunit (PriL).</text>
</comment>
<comment type="similarity">
    <text evidence="1">Belongs to the eukaryotic-type primase small subunit family.</text>
</comment>
<reference key="1">
    <citation type="journal article" date="2006" name="Proc. Natl. Acad. Sci. U.S.A.">
        <title>Genomic analysis of the uncultivated marine crenarchaeote Cenarchaeum symbiosum.</title>
        <authorList>
            <person name="Hallam S.J."/>
            <person name="Konstantinidis K.T."/>
            <person name="Putnam N."/>
            <person name="Schleper C."/>
            <person name="Watanabe Y."/>
            <person name="Sugahara J."/>
            <person name="Preston C."/>
            <person name="de la Torre J."/>
            <person name="Richardson P.M."/>
            <person name="DeLong E.F."/>
        </authorList>
    </citation>
    <scope>NUCLEOTIDE SEQUENCE [LARGE SCALE GENOMIC DNA]</scope>
    <source>
        <strain>A</strain>
    </source>
</reference>
<sequence>MHEKDLLLLAESFKRYYFEHFERIPVPDRAAQREFGYQRFGGGMVRHMRVKGSDELRLLLMQNSPSDVYCSNGIYSFPELPMSDKDWKEADLIFDIDAKDLGLPCRKDHTFRRCSSCGRSHSGDGCPRCGPGAHDQISVLCKDCIGGAKKEVEKLMHILEEDLGVGRDSVVVYFSGNEGFHVHIGGTQFQGLGSRERGELADYVRFVGAVPQAFGMGRNGAARRDFDYDDEGGWKGRLHREFFGPKSRSSVAITAAIKEGHRAFGERLKQISPVLGANIDPHVTTDIHRIFRLPGSLNGKSGLAKIPCINLDKFDPGSDACLIDSDEVQVTADMPMRLKLGGRRFGPYNGEAVSVPRFAAAYMVCKGLASAA</sequence>
<organism>
    <name type="scientific">Cenarchaeum symbiosum (strain A)</name>
    <dbReference type="NCBI Taxonomy" id="414004"/>
    <lineage>
        <taxon>Archaea</taxon>
        <taxon>Nitrososphaerota</taxon>
        <taxon>Candidatus Cenarchaeales</taxon>
        <taxon>Candidatus Cenarchaeaceae</taxon>
        <taxon>Candidatus Cenarchaeum</taxon>
    </lineage>
</organism>
<keyword id="KW-0235">DNA replication</keyword>
<keyword id="KW-0240">DNA-directed RNA polymerase</keyword>
<keyword id="KW-0460">Magnesium</keyword>
<keyword id="KW-0464">Manganese</keyword>
<keyword id="KW-0479">Metal-binding</keyword>
<keyword id="KW-0548">Nucleotidyltransferase</keyword>
<keyword id="KW-0639">Primosome</keyword>
<keyword id="KW-1185">Reference proteome</keyword>
<keyword id="KW-0804">Transcription</keyword>
<keyword id="KW-0808">Transferase</keyword>
<dbReference type="EC" id="2.7.7.-" evidence="1"/>
<dbReference type="EMBL" id="DP000238">
    <property type="protein sequence ID" value="ABK78536.1"/>
    <property type="molecule type" value="Genomic_DNA"/>
</dbReference>
<dbReference type="SMR" id="A0RYW9"/>
<dbReference type="STRING" id="414004.CENSYa_1927"/>
<dbReference type="EnsemblBacteria" id="ABK78536">
    <property type="protein sequence ID" value="ABK78536"/>
    <property type="gene ID" value="CENSYa_1927"/>
</dbReference>
<dbReference type="KEGG" id="csy:CENSYa_1927"/>
<dbReference type="PATRIC" id="fig|414004.10.peg.1761"/>
<dbReference type="HOGENOM" id="CLU_056123_1_0_2"/>
<dbReference type="Proteomes" id="UP000000758">
    <property type="component" value="Chromosome"/>
</dbReference>
<dbReference type="GO" id="GO:0000428">
    <property type="term" value="C:DNA-directed RNA polymerase complex"/>
    <property type="evidence" value="ECO:0007669"/>
    <property type="project" value="UniProtKB-KW"/>
</dbReference>
<dbReference type="GO" id="GO:1990077">
    <property type="term" value="C:primosome complex"/>
    <property type="evidence" value="ECO:0007669"/>
    <property type="project" value="UniProtKB-KW"/>
</dbReference>
<dbReference type="GO" id="GO:0003899">
    <property type="term" value="F:DNA-directed RNA polymerase activity"/>
    <property type="evidence" value="ECO:0007669"/>
    <property type="project" value="InterPro"/>
</dbReference>
<dbReference type="GO" id="GO:0046872">
    <property type="term" value="F:metal ion binding"/>
    <property type="evidence" value="ECO:0007669"/>
    <property type="project" value="UniProtKB-KW"/>
</dbReference>
<dbReference type="GO" id="GO:0006269">
    <property type="term" value="P:DNA replication, synthesis of primer"/>
    <property type="evidence" value="ECO:0007669"/>
    <property type="project" value="UniProtKB-UniRule"/>
</dbReference>
<dbReference type="CDD" id="cd04860">
    <property type="entry name" value="AE_Prim_S"/>
    <property type="match status" value="1"/>
</dbReference>
<dbReference type="Gene3D" id="3.90.920.10">
    <property type="entry name" value="DNA primase, PRIM domain"/>
    <property type="match status" value="1"/>
</dbReference>
<dbReference type="HAMAP" id="MF_00700">
    <property type="entry name" value="DNA_primase_sml_arc"/>
    <property type="match status" value="1"/>
</dbReference>
<dbReference type="InterPro" id="IPR002755">
    <property type="entry name" value="DNA_primase_S"/>
</dbReference>
<dbReference type="InterPro" id="IPR014052">
    <property type="entry name" value="DNA_primase_ssu_euk/arc"/>
</dbReference>
<dbReference type="InterPro" id="IPR023639">
    <property type="entry name" value="DNA_primase_ssu_PriS"/>
</dbReference>
<dbReference type="PANTHER" id="PTHR10536">
    <property type="entry name" value="DNA PRIMASE SMALL SUBUNIT"/>
    <property type="match status" value="1"/>
</dbReference>
<dbReference type="Pfam" id="PF01896">
    <property type="entry name" value="DNA_primase_S"/>
    <property type="match status" value="1"/>
</dbReference>
<dbReference type="SUPFAM" id="SSF56747">
    <property type="entry name" value="Prim-pol domain"/>
    <property type="match status" value="1"/>
</dbReference>
<evidence type="ECO:0000255" key="1">
    <source>
        <dbReference type="HAMAP-Rule" id="MF_00700"/>
    </source>
</evidence>
<protein>
    <recommendedName>
        <fullName evidence="1">DNA primase small subunit PriS</fullName>
        <ecNumber evidence="1">2.7.7.-</ecNumber>
    </recommendedName>
</protein>
<gene>
    <name evidence="1" type="primary">priS</name>
    <name type="synonym">priA</name>
    <name type="ordered locus">CENSYa_1927</name>
</gene>
<name>PRIS_CENSY</name>
<feature type="chain" id="PRO_1000192550" description="DNA primase small subunit PriS">
    <location>
        <begin position="1"/>
        <end position="372"/>
    </location>
</feature>
<feature type="active site" evidence="1">
    <location>
        <position position="95"/>
    </location>
</feature>
<feature type="active site" evidence="1">
    <location>
        <position position="97"/>
    </location>
</feature>
<feature type="active site" evidence="1">
    <location>
        <position position="280"/>
    </location>
</feature>